<evidence type="ECO:0000255" key="1"/>
<evidence type="ECO:0000255" key="2">
    <source>
        <dbReference type="PROSITE-ProRule" id="PRU00497"/>
    </source>
</evidence>
<accession>O02443</accession>
<feature type="signal peptide" evidence="1">
    <location>
        <begin position="1"/>
        <end position="14"/>
    </location>
</feature>
<feature type="chain" id="PRO_0000006419" description="Larval cuticle protein 1">
    <location>
        <begin position="15"/>
        <end position="109"/>
    </location>
</feature>
<feature type="domain" description="Chitin-binding type R&amp;R" evidence="2">
    <location>
        <begin position="34"/>
        <end position="107"/>
    </location>
</feature>
<keyword id="KW-0193">Cuticle</keyword>
<keyword id="KW-0732">Signal</keyword>
<organism>
    <name type="scientific">Helicoverpa armigera</name>
    <name type="common">Cotton bollworm</name>
    <name type="synonym">Heliothis armigera</name>
    <dbReference type="NCBI Taxonomy" id="29058"/>
    <lineage>
        <taxon>Eukaryota</taxon>
        <taxon>Metazoa</taxon>
        <taxon>Ecdysozoa</taxon>
        <taxon>Arthropoda</taxon>
        <taxon>Hexapoda</taxon>
        <taxon>Insecta</taxon>
        <taxon>Pterygota</taxon>
        <taxon>Neoptera</taxon>
        <taxon>Endopterygota</taxon>
        <taxon>Lepidoptera</taxon>
        <taxon>Glossata</taxon>
        <taxon>Ditrysia</taxon>
        <taxon>Noctuoidea</taxon>
        <taxon>Noctuidae</taxon>
        <taxon>Heliothinae</taxon>
        <taxon>Helicoverpa</taxon>
    </lineage>
</organism>
<proteinExistence type="inferred from homology"/>
<sequence length="109" mass="11856">MILVALALVALAVAAPPAEEPVQILRSEFNQQPEGSYQFGFETADGISRSETGDVKEALDEENKPHKVVVVRGSYSYTDKEGNPETVNYFADETGYHAEGSSIPKPARK</sequence>
<dbReference type="EMBL" id="AF004945">
    <property type="protein sequence ID" value="AAB61471.1"/>
    <property type="molecule type" value="mRNA"/>
</dbReference>
<dbReference type="OrthoDB" id="6515429at2759"/>
<dbReference type="GO" id="GO:0062129">
    <property type="term" value="C:chitin-based extracellular matrix"/>
    <property type="evidence" value="ECO:0007669"/>
    <property type="project" value="TreeGrafter"/>
</dbReference>
<dbReference type="GO" id="GO:0008010">
    <property type="term" value="F:structural constituent of chitin-based larval cuticle"/>
    <property type="evidence" value="ECO:0007669"/>
    <property type="project" value="TreeGrafter"/>
</dbReference>
<dbReference type="InterPro" id="IPR031311">
    <property type="entry name" value="CHIT_BIND_RR_consensus"/>
</dbReference>
<dbReference type="InterPro" id="IPR050468">
    <property type="entry name" value="Cuticle_Struct_Prot"/>
</dbReference>
<dbReference type="InterPro" id="IPR000618">
    <property type="entry name" value="Insect_cuticle"/>
</dbReference>
<dbReference type="PANTHER" id="PTHR10380:SF218">
    <property type="entry name" value="ADULT CUTICLE PROTEIN 65AA-RELATED"/>
    <property type="match status" value="1"/>
</dbReference>
<dbReference type="PANTHER" id="PTHR10380">
    <property type="entry name" value="CUTICLE PROTEIN"/>
    <property type="match status" value="1"/>
</dbReference>
<dbReference type="Pfam" id="PF00379">
    <property type="entry name" value="Chitin_bind_4"/>
    <property type="match status" value="1"/>
</dbReference>
<dbReference type="PRINTS" id="PR00947">
    <property type="entry name" value="CUTICLE"/>
</dbReference>
<dbReference type="PROSITE" id="PS00233">
    <property type="entry name" value="CHIT_BIND_RR_1"/>
    <property type="match status" value="1"/>
</dbReference>
<dbReference type="PROSITE" id="PS51155">
    <property type="entry name" value="CHIT_BIND_RR_2"/>
    <property type="match status" value="1"/>
</dbReference>
<protein>
    <recommendedName>
        <fullName>Larval cuticle protein 1</fullName>
    </recommendedName>
</protein>
<gene>
    <name type="primary">LCP1</name>
</gene>
<reference key="1">
    <citation type="journal article" date="1999" name="Insect Mol. Biol.">
        <title>Sequence analysis and expression of a mRNA for a larval-specific cuticular protein, LCP1, from Helicoverpa armigera.</title>
        <authorList>
            <person name="Henry S."/>
            <person name="Hobbs A."/>
        </authorList>
    </citation>
    <scope>NUCLEOTIDE SEQUENCE [MRNA]</scope>
    <source>
        <tissue>Integument</tissue>
    </source>
</reference>
<comment type="function">
    <text>Component of the cuticle of the larva of Helicoverpa armigera.</text>
</comment>
<name>LCP1_HELAM</name>